<protein>
    <recommendedName>
        <fullName evidence="1">Glutamate 5-kinase</fullName>
        <ecNumber evidence="1">2.7.2.11</ecNumber>
    </recommendedName>
    <alternativeName>
        <fullName evidence="1">Gamma-glutamyl kinase</fullName>
        <shortName evidence="1">GK</shortName>
    </alternativeName>
</protein>
<comment type="function">
    <text evidence="1">Catalyzes the transfer of a phosphate group to glutamate to form L-glutamate 5-phosphate.</text>
</comment>
<comment type="catalytic activity">
    <reaction evidence="1">
        <text>L-glutamate + ATP = L-glutamyl 5-phosphate + ADP</text>
        <dbReference type="Rhea" id="RHEA:14877"/>
        <dbReference type="ChEBI" id="CHEBI:29985"/>
        <dbReference type="ChEBI" id="CHEBI:30616"/>
        <dbReference type="ChEBI" id="CHEBI:58274"/>
        <dbReference type="ChEBI" id="CHEBI:456216"/>
        <dbReference type="EC" id="2.7.2.11"/>
    </reaction>
</comment>
<comment type="pathway">
    <text evidence="1">Amino-acid biosynthesis; L-proline biosynthesis; L-glutamate 5-semialdehyde from L-glutamate: step 1/2.</text>
</comment>
<comment type="subcellular location">
    <subcellularLocation>
        <location evidence="1">Cytoplasm</location>
    </subcellularLocation>
</comment>
<comment type="similarity">
    <text evidence="1">Belongs to the glutamate 5-kinase family.</text>
</comment>
<evidence type="ECO:0000255" key="1">
    <source>
        <dbReference type="HAMAP-Rule" id="MF_00456"/>
    </source>
</evidence>
<dbReference type="EC" id="2.7.2.11" evidence="1"/>
<dbReference type="EMBL" id="CP000285">
    <property type="protein sequence ID" value="ABE57839.1"/>
    <property type="molecule type" value="Genomic_DNA"/>
</dbReference>
<dbReference type="RefSeq" id="WP_011505785.1">
    <property type="nucleotide sequence ID" value="NC_007963.1"/>
</dbReference>
<dbReference type="SMR" id="Q1R0B9"/>
<dbReference type="STRING" id="290398.Csal_0477"/>
<dbReference type="GeneID" id="95333230"/>
<dbReference type="KEGG" id="csa:Csal_0477"/>
<dbReference type="eggNOG" id="COG0263">
    <property type="taxonomic scope" value="Bacteria"/>
</dbReference>
<dbReference type="HOGENOM" id="CLU_025400_2_0_6"/>
<dbReference type="OrthoDB" id="9804434at2"/>
<dbReference type="UniPathway" id="UPA00098">
    <property type="reaction ID" value="UER00359"/>
</dbReference>
<dbReference type="Proteomes" id="UP000000239">
    <property type="component" value="Chromosome"/>
</dbReference>
<dbReference type="GO" id="GO:0005829">
    <property type="term" value="C:cytosol"/>
    <property type="evidence" value="ECO:0007669"/>
    <property type="project" value="TreeGrafter"/>
</dbReference>
<dbReference type="GO" id="GO:0005524">
    <property type="term" value="F:ATP binding"/>
    <property type="evidence" value="ECO:0007669"/>
    <property type="project" value="UniProtKB-KW"/>
</dbReference>
<dbReference type="GO" id="GO:0004349">
    <property type="term" value="F:glutamate 5-kinase activity"/>
    <property type="evidence" value="ECO:0007669"/>
    <property type="project" value="UniProtKB-UniRule"/>
</dbReference>
<dbReference type="GO" id="GO:0003723">
    <property type="term" value="F:RNA binding"/>
    <property type="evidence" value="ECO:0007669"/>
    <property type="project" value="InterPro"/>
</dbReference>
<dbReference type="GO" id="GO:0055129">
    <property type="term" value="P:L-proline biosynthetic process"/>
    <property type="evidence" value="ECO:0007669"/>
    <property type="project" value="UniProtKB-UniRule"/>
</dbReference>
<dbReference type="CDD" id="cd04242">
    <property type="entry name" value="AAK_G5K_ProB"/>
    <property type="match status" value="1"/>
</dbReference>
<dbReference type="CDD" id="cd21157">
    <property type="entry name" value="PUA_G5K"/>
    <property type="match status" value="1"/>
</dbReference>
<dbReference type="FunFam" id="2.30.130.10:FF:000007">
    <property type="entry name" value="Glutamate 5-kinase"/>
    <property type="match status" value="1"/>
</dbReference>
<dbReference type="FunFam" id="3.40.1160.10:FF:000018">
    <property type="entry name" value="Glutamate 5-kinase"/>
    <property type="match status" value="1"/>
</dbReference>
<dbReference type="Gene3D" id="3.40.1160.10">
    <property type="entry name" value="Acetylglutamate kinase-like"/>
    <property type="match status" value="2"/>
</dbReference>
<dbReference type="Gene3D" id="2.30.130.10">
    <property type="entry name" value="PUA domain"/>
    <property type="match status" value="1"/>
</dbReference>
<dbReference type="HAMAP" id="MF_00456">
    <property type="entry name" value="ProB"/>
    <property type="match status" value="1"/>
</dbReference>
<dbReference type="InterPro" id="IPR036393">
    <property type="entry name" value="AceGlu_kinase-like_sf"/>
</dbReference>
<dbReference type="InterPro" id="IPR001048">
    <property type="entry name" value="Asp/Glu/Uridylate_kinase"/>
</dbReference>
<dbReference type="InterPro" id="IPR041739">
    <property type="entry name" value="G5K_ProB"/>
</dbReference>
<dbReference type="InterPro" id="IPR001057">
    <property type="entry name" value="Glu/AcGlu_kinase"/>
</dbReference>
<dbReference type="InterPro" id="IPR011529">
    <property type="entry name" value="Glu_5kinase"/>
</dbReference>
<dbReference type="InterPro" id="IPR005715">
    <property type="entry name" value="Glu_5kinase/COase_Synthase"/>
</dbReference>
<dbReference type="InterPro" id="IPR019797">
    <property type="entry name" value="Glutamate_5-kinase_CS"/>
</dbReference>
<dbReference type="InterPro" id="IPR002478">
    <property type="entry name" value="PUA"/>
</dbReference>
<dbReference type="InterPro" id="IPR015947">
    <property type="entry name" value="PUA-like_sf"/>
</dbReference>
<dbReference type="InterPro" id="IPR036974">
    <property type="entry name" value="PUA_sf"/>
</dbReference>
<dbReference type="NCBIfam" id="TIGR01027">
    <property type="entry name" value="proB"/>
    <property type="match status" value="1"/>
</dbReference>
<dbReference type="PANTHER" id="PTHR43654">
    <property type="entry name" value="GLUTAMATE 5-KINASE"/>
    <property type="match status" value="1"/>
</dbReference>
<dbReference type="PANTHER" id="PTHR43654:SF1">
    <property type="entry name" value="ISOPENTENYL PHOSPHATE KINASE"/>
    <property type="match status" value="1"/>
</dbReference>
<dbReference type="Pfam" id="PF00696">
    <property type="entry name" value="AA_kinase"/>
    <property type="match status" value="1"/>
</dbReference>
<dbReference type="Pfam" id="PF01472">
    <property type="entry name" value="PUA"/>
    <property type="match status" value="1"/>
</dbReference>
<dbReference type="PIRSF" id="PIRSF000729">
    <property type="entry name" value="GK"/>
    <property type="match status" value="1"/>
</dbReference>
<dbReference type="PRINTS" id="PR00474">
    <property type="entry name" value="GLU5KINASE"/>
</dbReference>
<dbReference type="SMART" id="SM00359">
    <property type="entry name" value="PUA"/>
    <property type="match status" value="1"/>
</dbReference>
<dbReference type="SUPFAM" id="SSF53633">
    <property type="entry name" value="Carbamate kinase-like"/>
    <property type="match status" value="1"/>
</dbReference>
<dbReference type="SUPFAM" id="SSF88697">
    <property type="entry name" value="PUA domain-like"/>
    <property type="match status" value="1"/>
</dbReference>
<dbReference type="PROSITE" id="PS00902">
    <property type="entry name" value="GLUTAMATE_5_KINASE"/>
    <property type="match status" value="1"/>
</dbReference>
<dbReference type="PROSITE" id="PS50890">
    <property type="entry name" value="PUA"/>
    <property type="match status" value="1"/>
</dbReference>
<feature type="chain" id="PRO_0000252975" description="Glutamate 5-kinase">
    <location>
        <begin position="1"/>
        <end position="378"/>
    </location>
</feature>
<feature type="domain" description="PUA" evidence="1">
    <location>
        <begin position="286"/>
        <end position="364"/>
    </location>
</feature>
<feature type="binding site" evidence="1">
    <location>
        <position position="21"/>
    </location>
    <ligand>
        <name>ATP</name>
        <dbReference type="ChEBI" id="CHEBI:30616"/>
    </ligand>
</feature>
<feature type="binding site" evidence="1">
    <location>
        <position position="61"/>
    </location>
    <ligand>
        <name>substrate</name>
    </ligand>
</feature>
<feature type="binding site" evidence="1">
    <location>
        <position position="148"/>
    </location>
    <ligand>
        <name>substrate</name>
    </ligand>
</feature>
<feature type="binding site" evidence="1">
    <location>
        <position position="160"/>
    </location>
    <ligand>
        <name>substrate</name>
    </ligand>
</feature>
<feature type="binding site" evidence="1">
    <location>
        <begin position="180"/>
        <end position="181"/>
    </location>
    <ligand>
        <name>ATP</name>
        <dbReference type="ChEBI" id="CHEBI:30616"/>
    </ligand>
</feature>
<proteinExistence type="inferred from homology"/>
<gene>
    <name evidence="1" type="primary">proB</name>
    <name type="ordered locus">Csal_0477</name>
</gene>
<reference key="1">
    <citation type="journal article" date="2011" name="Stand. Genomic Sci.">
        <title>Complete genome sequence of the halophilic and highly halotolerant Chromohalobacter salexigens type strain (1H11(T)).</title>
        <authorList>
            <person name="Copeland A."/>
            <person name="O'Connor K."/>
            <person name="Lucas S."/>
            <person name="Lapidus A."/>
            <person name="Berry K.W."/>
            <person name="Detter J.C."/>
            <person name="Del Rio T.G."/>
            <person name="Hammon N."/>
            <person name="Dalin E."/>
            <person name="Tice H."/>
            <person name="Pitluck S."/>
            <person name="Bruce D."/>
            <person name="Goodwin L."/>
            <person name="Han C."/>
            <person name="Tapia R."/>
            <person name="Saunders E."/>
            <person name="Schmutz J."/>
            <person name="Brettin T."/>
            <person name="Larimer F."/>
            <person name="Land M."/>
            <person name="Hauser L."/>
            <person name="Vargas C."/>
            <person name="Nieto J.J."/>
            <person name="Kyrpides N.C."/>
            <person name="Ivanova N."/>
            <person name="Goker M."/>
            <person name="Klenk H.P."/>
            <person name="Csonka L.N."/>
            <person name="Woyke T."/>
        </authorList>
    </citation>
    <scope>NUCLEOTIDE SEQUENCE [LARGE SCALE GENOMIC DNA]</scope>
    <source>
        <strain>ATCC BAA-138 / DSM 3043 / CIP 106854 / NCIMB 13768 / 1H11</strain>
    </source>
</reference>
<sequence length="378" mass="40526">MSESQSASRDALRRARRVVVKIGSALLTNDGRGLDADAIGEWVDQIAALHARGIEVVLVSSGAVAEGMARLGWVTRPSAVHELQAAAAVGQSGLSQCYEEHFARHGLRSAQVLLTHDDLSNRKRYLNARSALRSLVALRVVPVINENDTVVTDEIRFGDNDTLGALVANLLEADALVLLTDQEGLFDADPRHDPEARLIAEGRADDPALAAVAGDGGALGRGGMATKVRAARLAARSGALTAIASGRQPEVLTRLMQGETLGTLLMPDHAPLAARKRWLAGQLQVRGTLVLDAGAVKVLREHGSSLLPVGVRRVEGEFKRGDMLVCVDEQGQRIAKGLVNYGSDEARRIMGQPSRRIEELLGYMESPELIHRDNLVIV</sequence>
<name>PROB_CHRSD</name>
<organism>
    <name type="scientific">Chromohalobacter salexigens (strain ATCC BAA-138 / DSM 3043 / CIP 106854 / NCIMB 13768 / 1H11)</name>
    <dbReference type="NCBI Taxonomy" id="290398"/>
    <lineage>
        <taxon>Bacteria</taxon>
        <taxon>Pseudomonadati</taxon>
        <taxon>Pseudomonadota</taxon>
        <taxon>Gammaproteobacteria</taxon>
        <taxon>Oceanospirillales</taxon>
        <taxon>Halomonadaceae</taxon>
        <taxon>Chromohalobacter</taxon>
    </lineage>
</organism>
<accession>Q1R0B9</accession>
<keyword id="KW-0028">Amino-acid biosynthesis</keyword>
<keyword id="KW-0067">ATP-binding</keyword>
<keyword id="KW-0963">Cytoplasm</keyword>
<keyword id="KW-0418">Kinase</keyword>
<keyword id="KW-0547">Nucleotide-binding</keyword>
<keyword id="KW-0641">Proline biosynthesis</keyword>
<keyword id="KW-1185">Reference proteome</keyword>
<keyword id="KW-0808">Transferase</keyword>